<proteinExistence type="inferred from homology"/>
<keyword id="KW-0067">ATP-binding</keyword>
<keyword id="KW-0963">Cytoplasm</keyword>
<keyword id="KW-0436">Ligase</keyword>
<keyword id="KW-0535">Nitrogen fixation</keyword>
<keyword id="KW-0547">Nucleotide-binding</keyword>
<comment type="catalytic activity">
    <reaction>
        <text>L-glutamate + NH4(+) + ATP = L-glutamine + ADP + phosphate + H(+)</text>
        <dbReference type="Rhea" id="RHEA:16169"/>
        <dbReference type="ChEBI" id="CHEBI:15378"/>
        <dbReference type="ChEBI" id="CHEBI:28938"/>
        <dbReference type="ChEBI" id="CHEBI:29985"/>
        <dbReference type="ChEBI" id="CHEBI:30616"/>
        <dbReference type="ChEBI" id="CHEBI:43474"/>
        <dbReference type="ChEBI" id="CHEBI:58359"/>
        <dbReference type="ChEBI" id="CHEBI:456216"/>
        <dbReference type="EC" id="6.3.1.2"/>
    </reaction>
</comment>
<comment type="subunit">
    <text>Homooctamer.</text>
</comment>
<comment type="subcellular location">
    <subcellularLocation>
        <location>Cytoplasm</location>
    </subcellularLocation>
</comment>
<comment type="similarity">
    <text evidence="3">Belongs to the glutamine synthetase family.</text>
</comment>
<sequence>MSVLSDLINLNLSDTTEKIIAEYIWVGGSGVDLRSKARTLSGPVNDPSKLPKWNYDGSSTGQAPGKDSEVILWPQAIFKDPFRRGNNILVMCDTYTPAGEPIPTNKRHAAAKIFSHPDVVAEEPWFGIEQEYTLLQKDIHWPIGWPLGGFPGPQGPYYCGTGAEKAFGRDIVDSHYKACLYAGINISGINAEVMPGQWEFQVGPSVGISAGDELWVARYILERITEIAGVVLSLDPKPIPGDWNGAGAHTNYSTKSMRNDGGYEVIKKAIEKLGKRHNEHIAAYGEGNERRLTGRHETADISTFFWGVANRGASIRVGRDTEKEGKGYFEDRRPASNMDPYVVTSMIAETTLL</sequence>
<feature type="chain" id="PRO_0000153177" description="Glutamine synthetase nodule isozyme">
    <location>
        <begin position="1"/>
        <end position="353"/>
    </location>
</feature>
<feature type="domain" description="GS beta-grasp" evidence="1">
    <location>
        <begin position="19"/>
        <end position="99"/>
    </location>
</feature>
<feature type="domain" description="GS catalytic" evidence="2">
    <location>
        <begin position="106"/>
        <end position="353"/>
    </location>
</feature>
<name>GLNA_LUPLU</name>
<accession>P52782</accession>
<dbReference type="EC" id="6.3.1.2"/>
<dbReference type="EMBL" id="X71399">
    <property type="protein sequence ID" value="CAA50522.1"/>
    <property type="molecule type" value="Genomic_DNA"/>
</dbReference>
<dbReference type="SMR" id="P52782"/>
<dbReference type="GO" id="GO:0005737">
    <property type="term" value="C:cytoplasm"/>
    <property type="evidence" value="ECO:0007669"/>
    <property type="project" value="UniProtKB-SubCell"/>
</dbReference>
<dbReference type="GO" id="GO:0005524">
    <property type="term" value="F:ATP binding"/>
    <property type="evidence" value="ECO:0007669"/>
    <property type="project" value="UniProtKB-KW"/>
</dbReference>
<dbReference type="GO" id="GO:0004356">
    <property type="term" value="F:glutamine synthetase activity"/>
    <property type="evidence" value="ECO:0007669"/>
    <property type="project" value="UniProtKB-EC"/>
</dbReference>
<dbReference type="GO" id="GO:0006542">
    <property type="term" value="P:glutamine biosynthetic process"/>
    <property type="evidence" value="ECO:0007669"/>
    <property type="project" value="InterPro"/>
</dbReference>
<dbReference type="FunFam" id="3.30.590.10:FF:000004">
    <property type="entry name" value="Glutamine synthetase"/>
    <property type="match status" value="1"/>
</dbReference>
<dbReference type="FunFam" id="3.10.20.70:FF:000003">
    <property type="entry name" value="Glutamine synthetase, chloroplastic"/>
    <property type="match status" value="1"/>
</dbReference>
<dbReference type="Gene3D" id="3.10.20.70">
    <property type="entry name" value="Glutamine synthetase, N-terminal domain"/>
    <property type="match status" value="1"/>
</dbReference>
<dbReference type="Gene3D" id="3.30.590.10">
    <property type="entry name" value="Glutamine synthetase/guanido kinase, catalytic domain"/>
    <property type="match status" value="1"/>
</dbReference>
<dbReference type="InterPro" id="IPR008147">
    <property type="entry name" value="Gln_synt_N"/>
</dbReference>
<dbReference type="InterPro" id="IPR036651">
    <property type="entry name" value="Gln_synt_N_sf"/>
</dbReference>
<dbReference type="InterPro" id="IPR014746">
    <property type="entry name" value="Gln_synth/guanido_kin_cat_dom"/>
</dbReference>
<dbReference type="InterPro" id="IPR008146">
    <property type="entry name" value="Gln_synth_cat_dom"/>
</dbReference>
<dbReference type="InterPro" id="IPR027303">
    <property type="entry name" value="Gln_synth_gly_rich_site"/>
</dbReference>
<dbReference type="InterPro" id="IPR027302">
    <property type="entry name" value="Gln_synth_N_conserv_site"/>
</dbReference>
<dbReference type="InterPro" id="IPR050292">
    <property type="entry name" value="Glutamine_Synthetase"/>
</dbReference>
<dbReference type="PANTHER" id="PTHR20852">
    <property type="entry name" value="GLUTAMINE SYNTHETASE"/>
    <property type="match status" value="1"/>
</dbReference>
<dbReference type="PANTHER" id="PTHR20852:SF93">
    <property type="entry name" value="GLUTAMINE SYNTHETASE CYTOSOLIC ISOZYME 1-1"/>
    <property type="match status" value="1"/>
</dbReference>
<dbReference type="Pfam" id="PF00120">
    <property type="entry name" value="Gln-synt_C"/>
    <property type="match status" value="1"/>
</dbReference>
<dbReference type="SMART" id="SM01230">
    <property type="entry name" value="Gln-synt_C"/>
    <property type="match status" value="1"/>
</dbReference>
<dbReference type="SUPFAM" id="SSF54368">
    <property type="entry name" value="Glutamine synthetase, N-terminal domain"/>
    <property type="match status" value="1"/>
</dbReference>
<dbReference type="SUPFAM" id="SSF55931">
    <property type="entry name" value="Glutamine synthetase/guanido kinase"/>
    <property type="match status" value="1"/>
</dbReference>
<dbReference type="PROSITE" id="PS00180">
    <property type="entry name" value="GLNA_1"/>
    <property type="match status" value="1"/>
</dbReference>
<dbReference type="PROSITE" id="PS00181">
    <property type="entry name" value="GLNA_ATP"/>
    <property type="match status" value="1"/>
</dbReference>
<dbReference type="PROSITE" id="PS51986">
    <property type="entry name" value="GS_BETA_GRASP"/>
    <property type="match status" value="1"/>
</dbReference>
<dbReference type="PROSITE" id="PS51987">
    <property type="entry name" value="GS_CATALYTIC"/>
    <property type="match status" value="1"/>
</dbReference>
<protein>
    <recommendedName>
        <fullName>Glutamine synthetase nodule isozyme</fullName>
        <shortName>GS</shortName>
        <ecNumber>6.3.1.2</ecNumber>
    </recommendedName>
    <alternativeName>
        <fullName>Glutamate--ammonia ligase</fullName>
    </alternativeName>
</protein>
<organism>
    <name type="scientific">Lupinus luteus</name>
    <name type="common">European yellow lupine</name>
    <dbReference type="NCBI Taxonomy" id="3873"/>
    <lineage>
        <taxon>Eukaryota</taxon>
        <taxon>Viridiplantae</taxon>
        <taxon>Streptophyta</taxon>
        <taxon>Embryophyta</taxon>
        <taxon>Tracheophyta</taxon>
        <taxon>Spermatophyta</taxon>
        <taxon>Magnoliopsida</taxon>
        <taxon>eudicotyledons</taxon>
        <taxon>Gunneridae</taxon>
        <taxon>Pentapetalae</taxon>
        <taxon>rosids</taxon>
        <taxon>fabids</taxon>
        <taxon>Fabales</taxon>
        <taxon>Fabaceae</taxon>
        <taxon>Papilionoideae</taxon>
        <taxon>50 kb inversion clade</taxon>
        <taxon>genistoids sensu lato</taxon>
        <taxon>core genistoids</taxon>
        <taxon>Genisteae</taxon>
        <taxon>Lupinus</taxon>
    </lineage>
</organism>
<evidence type="ECO:0000255" key="1">
    <source>
        <dbReference type="PROSITE-ProRule" id="PRU01330"/>
    </source>
</evidence>
<evidence type="ECO:0000255" key="2">
    <source>
        <dbReference type="PROSITE-ProRule" id="PRU01331"/>
    </source>
</evidence>
<evidence type="ECO:0000305" key="3"/>
<reference key="1">
    <citation type="journal article" date="1993" name="Gene">
        <title>Cloning and characterization of a nodule-enhanced glutamine synthetase-encoding gene from Lupinus luteus.</title>
        <authorList>
            <person name="Boron L."/>
            <person name="Legocki A.B."/>
        </authorList>
    </citation>
    <scope>NUCLEOTIDE SEQUENCE [GENOMIC DNA]</scope>
    <source>
        <strain>cv. Ventus</strain>
        <tissue>Root</tissue>
    </source>
</reference>